<evidence type="ECO:0000250" key="1"/>
<evidence type="ECO:0000255" key="2">
    <source>
        <dbReference type="PROSITE-ProRule" id="PRU00031"/>
    </source>
</evidence>
<dbReference type="PIR" id="B29235">
    <property type="entry name" value="B29235"/>
</dbReference>
<dbReference type="OrthoDB" id="4473401at2759"/>
<dbReference type="GO" id="GO:0005615">
    <property type="term" value="C:extracellular space"/>
    <property type="evidence" value="ECO:0007669"/>
    <property type="project" value="TreeGrafter"/>
</dbReference>
<dbReference type="GO" id="GO:0004867">
    <property type="term" value="F:serine-type endopeptidase inhibitor activity"/>
    <property type="evidence" value="ECO:0007669"/>
    <property type="project" value="UniProtKB-KW"/>
</dbReference>
<dbReference type="CDD" id="cd00109">
    <property type="entry name" value="Kunitz-type"/>
    <property type="match status" value="1"/>
</dbReference>
<dbReference type="FunFam" id="4.10.410.10:FF:000020">
    <property type="entry name" value="Collagen, type VI, alpha 3"/>
    <property type="match status" value="1"/>
</dbReference>
<dbReference type="Gene3D" id="4.10.410.10">
    <property type="entry name" value="Pancreatic trypsin inhibitor Kunitz domain"/>
    <property type="match status" value="1"/>
</dbReference>
<dbReference type="InterPro" id="IPR002223">
    <property type="entry name" value="Kunitz_BPTI"/>
</dbReference>
<dbReference type="InterPro" id="IPR036880">
    <property type="entry name" value="Kunitz_BPTI_sf"/>
</dbReference>
<dbReference type="InterPro" id="IPR020901">
    <property type="entry name" value="Prtase_inh_Kunz-CS"/>
</dbReference>
<dbReference type="InterPro" id="IPR050098">
    <property type="entry name" value="TFPI/VKTCI-like"/>
</dbReference>
<dbReference type="PANTHER" id="PTHR10083:SF374">
    <property type="entry name" value="BPTI_KUNITZ INHIBITOR DOMAIN-CONTAINING PROTEIN"/>
    <property type="match status" value="1"/>
</dbReference>
<dbReference type="PANTHER" id="PTHR10083">
    <property type="entry name" value="KUNITZ-TYPE PROTEASE INHIBITOR-RELATED"/>
    <property type="match status" value="1"/>
</dbReference>
<dbReference type="Pfam" id="PF00014">
    <property type="entry name" value="Kunitz_BPTI"/>
    <property type="match status" value="1"/>
</dbReference>
<dbReference type="PRINTS" id="PR00759">
    <property type="entry name" value="BASICPTASE"/>
</dbReference>
<dbReference type="SMART" id="SM00131">
    <property type="entry name" value="KU"/>
    <property type="match status" value="1"/>
</dbReference>
<dbReference type="SUPFAM" id="SSF57362">
    <property type="entry name" value="BPTI-like"/>
    <property type="match status" value="1"/>
</dbReference>
<dbReference type="PROSITE" id="PS00280">
    <property type="entry name" value="BPTI_KUNITZ_1"/>
    <property type="match status" value="1"/>
</dbReference>
<dbReference type="PROSITE" id="PS50279">
    <property type="entry name" value="BPTI_KUNITZ_2"/>
    <property type="match status" value="1"/>
</dbReference>
<feature type="chain" id="PRO_0000155426" description="Hemolymph trypsin inhibitor B">
    <location>
        <begin position="1"/>
        <end position="53" status="greater than"/>
    </location>
</feature>
<feature type="domain" description="BPTI/Kunitz inhibitor" evidence="2">
    <location>
        <begin position="4"/>
        <end position="53" status="greater than"/>
    </location>
</feature>
<feature type="site" description="Reactive bond for trypsin" evidence="1">
    <location>
        <begin position="14"/>
        <end position="15"/>
    </location>
</feature>
<feature type="disulfide bond" evidence="2">
    <location>
        <begin position="4"/>
        <end status="unknown"/>
    </location>
</feature>
<feature type="disulfide bond" evidence="2">
    <location>
        <begin position="13"/>
        <end position="37"/>
    </location>
</feature>
<feature type="disulfide bond" evidence="2">
    <location>
        <begin position="29"/>
        <end position="50"/>
    </location>
</feature>
<feature type="non-terminal residue">
    <location>
        <position position="53"/>
    </location>
</feature>
<comment type="function">
    <text>Inhibits trypsin.</text>
</comment>
<protein>
    <recommendedName>
        <fullName>Hemolymph trypsin inhibitor B</fullName>
    </recommendedName>
    <alternativeName>
        <fullName>BPI-type</fullName>
    </alternativeName>
</protein>
<sequence>EDICSLPPEVGPCRAGFLKFAYYSELNKCKLFTYGGCQGNENNFETLQACXQA</sequence>
<name>HTIB_MANSE</name>
<keyword id="KW-0903">Direct protein sequencing</keyword>
<keyword id="KW-1015">Disulfide bond</keyword>
<keyword id="KW-0646">Protease inhibitor</keyword>
<keyword id="KW-0722">Serine protease inhibitor</keyword>
<proteinExistence type="evidence at protein level"/>
<organism>
    <name type="scientific">Manduca sexta</name>
    <name type="common">Tobacco hawkmoth</name>
    <name type="synonym">Tobacco hornworm</name>
    <dbReference type="NCBI Taxonomy" id="7130"/>
    <lineage>
        <taxon>Eukaryota</taxon>
        <taxon>Metazoa</taxon>
        <taxon>Ecdysozoa</taxon>
        <taxon>Arthropoda</taxon>
        <taxon>Hexapoda</taxon>
        <taxon>Insecta</taxon>
        <taxon>Pterygota</taxon>
        <taxon>Neoptera</taxon>
        <taxon>Endopterygota</taxon>
        <taxon>Lepidoptera</taxon>
        <taxon>Glossata</taxon>
        <taxon>Ditrysia</taxon>
        <taxon>Bombycoidea</taxon>
        <taxon>Sphingidae</taxon>
        <taxon>Sphinginae</taxon>
        <taxon>Sphingini</taxon>
        <taxon>Manduca</taxon>
    </lineage>
</organism>
<accession>P26227</accession>
<reference key="1">
    <citation type="journal article" date="1988" name="J. Biol. Chem.">
        <title>Purification and characterization of two trypsin inhibitors from the hemolymph of Manduca sexta larvae.</title>
        <authorList>
            <person name="Ramesh N."/>
            <person name="Sugumaran M."/>
            <person name="Mole J.E."/>
        </authorList>
    </citation>
    <scope>PROTEIN SEQUENCE</scope>
    <source>
        <tissue>Larval hemolymph</tissue>
    </source>
</reference>